<feature type="chain" id="PRO_1000148367" description="Ribonuclease P protein component 2">
    <location>
        <begin position="1"/>
        <end position="160"/>
    </location>
</feature>
<keyword id="KW-0963">Cytoplasm</keyword>
<keyword id="KW-0255">Endonuclease</keyword>
<keyword id="KW-0378">Hydrolase</keyword>
<keyword id="KW-0540">Nuclease</keyword>
<keyword id="KW-0819">tRNA processing</keyword>
<protein>
    <recommendedName>
        <fullName evidence="1">Ribonuclease P protein component 2</fullName>
        <shortName evidence="1">RNase P component 2</shortName>
        <ecNumber evidence="1">3.1.26.5</ecNumber>
    </recommendedName>
    <alternativeName>
        <fullName evidence="1">Pop5</fullName>
    </alternativeName>
</protein>
<comment type="function">
    <text evidence="1">Part of ribonuclease P, a protein complex that generates mature tRNA molecules by cleaving their 5'-ends.</text>
</comment>
<comment type="catalytic activity">
    <reaction evidence="1">
        <text>Endonucleolytic cleavage of RNA, removing 5'-extranucleotides from tRNA precursor.</text>
        <dbReference type="EC" id="3.1.26.5"/>
    </reaction>
</comment>
<comment type="subunit">
    <text evidence="1">Consists of a catalytic RNA component and at least 4-5 protein subunits.</text>
</comment>
<comment type="subcellular location">
    <subcellularLocation>
        <location evidence="1">Cytoplasm</location>
    </subcellularLocation>
</comment>
<comment type="similarity">
    <text evidence="1">Belongs to the eukaryotic/archaeal RNase P protein component 2 family.</text>
</comment>
<gene>
    <name evidence="1" type="primary">rnp2</name>
    <name type="ordered locus">Memar_1679</name>
</gene>
<reference key="1">
    <citation type="journal article" date="2009" name="Stand. Genomic Sci.">
        <title>Complete genome sequence of Methanoculleus marisnigri Romesser et al. 1981 type strain JR1.</title>
        <authorList>
            <person name="Anderson I.J."/>
            <person name="Sieprawska-Lupa M."/>
            <person name="Lapidus A."/>
            <person name="Nolan M."/>
            <person name="Copeland A."/>
            <person name="Glavina Del Rio T."/>
            <person name="Tice H."/>
            <person name="Dalin E."/>
            <person name="Barry K."/>
            <person name="Saunders E."/>
            <person name="Han C."/>
            <person name="Brettin T."/>
            <person name="Detter J.C."/>
            <person name="Bruce D."/>
            <person name="Mikhailova N."/>
            <person name="Pitluck S."/>
            <person name="Hauser L."/>
            <person name="Land M."/>
            <person name="Lucas S."/>
            <person name="Richardson P."/>
            <person name="Whitman W.B."/>
            <person name="Kyrpides N.C."/>
        </authorList>
    </citation>
    <scope>NUCLEOTIDE SEQUENCE [LARGE SCALE GENOMIC DNA]</scope>
    <source>
        <strain>ATCC 35101 / DSM 1498 / JR1</strain>
    </source>
</reference>
<proteinExistence type="inferred from homology"/>
<dbReference type="EC" id="3.1.26.5" evidence="1"/>
<dbReference type="EMBL" id="CP000562">
    <property type="protein sequence ID" value="ABN57606.1"/>
    <property type="molecule type" value="Genomic_DNA"/>
</dbReference>
<dbReference type="RefSeq" id="WP_011844517.1">
    <property type="nucleotide sequence ID" value="NC_009051.1"/>
</dbReference>
<dbReference type="SMR" id="A3CW56"/>
<dbReference type="STRING" id="368407.Memar_1679"/>
<dbReference type="GeneID" id="4848406"/>
<dbReference type="KEGG" id="mem:Memar_1679"/>
<dbReference type="eggNOG" id="arCOG01365">
    <property type="taxonomic scope" value="Archaea"/>
</dbReference>
<dbReference type="HOGENOM" id="CLU_137733_1_0_2"/>
<dbReference type="OrthoDB" id="19261at2157"/>
<dbReference type="Proteomes" id="UP000002146">
    <property type="component" value="Chromosome"/>
</dbReference>
<dbReference type="GO" id="GO:0005737">
    <property type="term" value="C:cytoplasm"/>
    <property type="evidence" value="ECO:0007669"/>
    <property type="project" value="UniProtKB-SubCell"/>
</dbReference>
<dbReference type="GO" id="GO:0030677">
    <property type="term" value="C:ribonuclease P complex"/>
    <property type="evidence" value="ECO:0007669"/>
    <property type="project" value="UniProtKB-UniRule"/>
</dbReference>
<dbReference type="GO" id="GO:0004526">
    <property type="term" value="F:ribonuclease P activity"/>
    <property type="evidence" value="ECO:0007669"/>
    <property type="project" value="UniProtKB-UniRule"/>
</dbReference>
<dbReference type="GO" id="GO:0001682">
    <property type="term" value="P:tRNA 5'-leader removal"/>
    <property type="evidence" value="ECO:0007669"/>
    <property type="project" value="UniProtKB-UniRule"/>
</dbReference>
<dbReference type="Gene3D" id="3.30.70.3250">
    <property type="entry name" value="Ribonuclease P, Pop5 subunit"/>
    <property type="match status" value="1"/>
</dbReference>
<dbReference type="HAMAP" id="MF_00755">
    <property type="entry name" value="RNase_P_2"/>
    <property type="match status" value="1"/>
</dbReference>
<dbReference type="InterPro" id="IPR002759">
    <property type="entry name" value="Pop5/Rpp14/Rnp2-like"/>
</dbReference>
<dbReference type="InterPro" id="IPR038085">
    <property type="entry name" value="Rnp2-like_sf"/>
</dbReference>
<dbReference type="Pfam" id="PF01900">
    <property type="entry name" value="RNase_P_Rpp14"/>
    <property type="match status" value="1"/>
</dbReference>
<dbReference type="SUPFAM" id="SSF160350">
    <property type="entry name" value="Rnp2-like"/>
    <property type="match status" value="1"/>
</dbReference>
<accession>A3CW56</accession>
<evidence type="ECO:0000255" key="1">
    <source>
        <dbReference type="HAMAP-Rule" id="MF_00755"/>
    </source>
</evidence>
<sequence>MRPRPPAMRTKRRYILARILPYRARVDQKQMYFAVIEAATSLLGDAAAGLAQPAVVFCEGGYVVVRCRRGTEKDVAVALSTVTAVADERIALRTVATSGTIHALRRRMRSIRQLPGDEEVKIGETYFAVYRYPRQKVDLVEKGIKHQKSLFFTEADLEER</sequence>
<name>RNP2_METMJ</name>
<organism>
    <name type="scientific">Methanoculleus marisnigri (strain ATCC 35101 / DSM 1498 / JR1)</name>
    <dbReference type="NCBI Taxonomy" id="368407"/>
    <lineage>
        <taxon>Archaea</taxon>
        <taxon>Methanobacteriati</taxon>
        <taxon>Methanobacteriota</taxon>
        <taxon>Stenosarchaea group</taxon>
        <taxon>Methanomicrobia</taxon>
        <taxon>Methanomicrobiales</taxon>
        <taxon>Methanomicrobiaceae</taxon>
        <taxon>Methanoculleus</taxon>
    </lineage>
</organism>